<gene>
    <name evidence="1" type="primary">pan</name>
    <name type="ordered locus">MJ1176</name>
</gene>
<feature type="chain" id="PRO_0000084743" description="Proteasome-activating nucleotidase">
    <location>
        <begin position="1"/>
        <end position="430"/>
    </location>
</feature>
<feature type="region of interest" description="Docks into pockets in the proteasome alpha-ring to cause gate opening">
    <location>
        <begin position="428"/>
        <end position="430"/>
    </location>
</feature>
<feature type="coiled-coil region" evidence="1">
    <location>
        <begin position="9"/>
        <end position="89"/>
    </location>
</feature>
<feature type="binding site">
    <location>
        <begin position="214"/>
        <end position="219"/>
    </location>
    <ligand>
        <name>ATP</name>
        <dbReference type="ChEBI" id="CHEBI:30616"/>
    </ligand>
</feature>
<feature type="binding site">
    <location>
        <position position="353"/>
    </location>
    <ligand>
        <name>ATP</name>
        <dbReference type="ChEBI" id="CHEBI:30616"/>
    </ligand>
</feature>
<feature type="mutagenesis site" description="7% of wild-type unfolding activity." evidence="7">
    <original>G</original>
    <variation>W</variation>
    <location>
        <position position="113"/>
    </location>
</feature>
<feature type="mutagenesis site" description="2% of wild-type unfolding activity." evidence="7">
    <original>D</original>
    <variation>A</variation>
    <location>
        <position position="153"/>
    </location>
</feature>
<feature type="mutagenesis site" description="1.5% of wild-type unfolding activity." evidence="7">
    <original>A</original>
    <variation>D</variation>
    <location>
        <position position="156"/>
    </location>
</feature>
<feature type="mutagenesis site" description="4% of wild-type unfolding activity." evidence="7">
    <original>K</original>
    <variation>G</variation>
    <location>
        <position position="157"/>
    </location>
</feature>
<feature type="mutagenesis site" description="1% of wild-type unfolding activity." evidence="7">
    <original>F</original>
    <variation>A</variation>
    <location>
        <position position="244"/>
    </location>
</feature>
<feature type="mutagenesis site" description="4% of wild-type unfolding activity." evidence="7">
    <original>I</original>
    <variation>A</variation>
    <variation>W</variation>
    <location>
        <position position="245"/>
    </location>
</feature>
<feature type="mutagenesis site" description="5% of wild-type unfolding activity." evidence="7">
    <original>G</original>
    <variation>A</variation>
    <location>
        <position position="246"/>
    </location>
</feature>
<feature type="mutagenesis site" description="4% of wild-type unfolding activity." evidence="7">
    <original>SL</original>
    <variation>AA</variation>
    <location>
        <begin position="250"/>
        <end position="251"/>
    </location>
</feature>
<feature type="mutagenesis site" description="9% of wild-type unfolding activity." evidence="7">
    <original>E</original>
    <variation>K</variation>
    <location>
        <position position="271"/>
    </location>
</feature>
<feature type="mutagenesis site" description="1.6% of wild-type unfolding activity." evidence="7">
    <original>G</original>
    <variation>W</variation>
    <location>
        <position position="285"/>
    </location>
</feature>
<feature type="mutagenesis site" description="No effect on unfolding activity." evidence="7">
    <original>G</original>
    <variation>A</variation>
    <location>
        <position position="286"/>
    </location>
</feature>
<feature type="mutagenesis site" description="4% of wild-type unfolding activity." evidence="7">
    <original>G</original>
    <variation>L</variation>
    <variation>W</variation>
    <location>
        <position position="286"/>
    </location>
</feature>
<feature type="mutagenesis site" description="Markedly decreased PAN's ability to stimulate gate opening." evidence="5">
    <original>L</original>
    <variation>A</variation>
    <variation>V</variation>
    <variation>F</variation>
    <location>
        <position position="428"/>
    </location>
</feature>
<feature type="mutagenesis site" description="Slightly decreased PAN's ability to stimulate gate opening." evidence="5">
    <original>L</original>
    <variation>I</variation>
    <variation>Y</variation>
    <variation>W</variation>
    <location>
        <position position="428"/>
    </location>
</feature>
<feature type="mutagenesis site" description="Loss of PAN's ability to stimulate gate opening. Fails to associate with the proteasome." evidence="5">
    <original>L</original>
    <variation>R</variation>
    <variation>D</variation>
    <variation>C</variation>
    <variation>P</variation>
    <location>
        <position position="428"/>
    </location>
</feature>
<feature type="mutagenesis site" description="Loss of PAN's ability to stimulate gate opening. Fails to associate with the proteasome." evidence="5">
    <original>Y</original>
    <variation>A</variation>
    <variation>V</variation>
    <variation>I</variation>
    <variation>L</variation>
    <variation>F</variation>
    <variation>W</variation>
    <variation>R</variation>
    <variation>D</variation>
    <location>
        <position position="429"/>
    </location>
</feature>
<feature type="mutagenesis site" description="No effect on PAN's ability to stimulate gate opening. Still associates with the proteasome." evidence="5">
    <original>R</original>
    <variation>A</variation>
    <variation>W</variation>
    <location>
        <position position="430"/>
    </location>
</feature>
<feature type="mutagenesis site" description="Loss of PAN's ability to stimulate gate opening." evidence="5">
    <original>R</original>
    <variation>D</variation>
    <location>
        <position position="430"/>
    </location>
</feature>
<feature type="mutagenesis site" description="Slightly decreased PAN's ability to stimulate gate opening." evidence="5">
    <original>R</original>
    <variation>G</variation>
    <location>
        <position position="430"/>
    </location>
</feature>
<feature type="mutagenesis site" description="Markedly decreased PAN's ability to stimulate gate opening." evidence="5">
    <original>R</original>
    <variation>L</variation>
    <location>
        <position position="430"/>
    </location>
</feature>
<feature type="mutagenesis site" description="Loss of PAN's ability to stimulate gate opening. Fails to associate with the proteasome." evidence="5">
    <original>R</original>
    <variation>RA</variation>
    <location>
        <position position="430"/>
    </location>
</feature>
<feature type="mutagenesis site" description="Loss of PAN's ability to stimulate gate opening. Fails to associate with the proteasome." evidence="5">
    <location>
        <position position="430"/>
    </location>
</feature>
<feature type="helix" evidence="9">
    <location>
        <begin position="75"/>
        <end position="88"/>
    </location>
</feature>
<feature type="strand" evidence="9">
    <location>
        <begin position="92"/>
        <end position="102"/>
    </location>
</feature>
<feature type="strand" evidence="9">
    <location>
        <begin position="105"/>
        <end position="110"/>
    </location>
</feature>
<feature type="strand" evidence="9">
    <location>
        <begin position="113"/>
        <end position="120"/>
    </location>
</feature>
<feature type="helix" evidence="9">
    <location>
        <begin position="126"/>
        <end position="128"/>
    </location>
</feature>
<feature type="strand" evidence="9">
    <location>
        <begin position="134"/>
        <end position="137"/>
    </location>
</feature>
<feature type="turn" evidence="9">
    <location>
        <begin position="139"/>
        <end position="141"/>
    </location>
</feature>
<feature type="strand" evidence="9">
    <location>
        <begin position="144"/>
        <end position="147"/>
    </location>
</feature>
<feature type="strand" evidence="10">
    <location>
        <begin position="159"/>
        <end position="164"/>
    </location>
</feature>
<feature type="helix" evidence="10">
    <location>
        <begin position="169"/>
        <end position="171"/>
    </location>
</feature>
<feature type="helix" evidence="10">
    <location>
        <begin position="176"/>
        <end position="185"/>
    </location>
</feature>
<feature type="helix" evidence="10">
    <location>
        <begin position="187"/>
        <end position="191"/>
    </location>
</feature>
<feature type="helix" evidence="10">
    <location>
        <begin position="193"/>
        <end position="199"/>
    </location>
</feature>
<feature type="strand" evidence="10">
    <location>
        <begin position="205"/>
        <end position="216"/>
    </location>
</feature>
<feature type="helix" evidence="10">
    <location>
        <begin position="217"/>
        <end position="227"/>
    </location>
</feature>
<feature type="strand" evidence="10">
    <location>
        <begin position="231"/>
        <end position="236"/>
    </location>
</feature>
<feature type="helix" evidence="10">
    <location>
        <begin position="237"/>
        <end position="240"/>
    </location>
</feature>
<feature type="helix" evidence="10">
    <location>
        <begin position="247"/>
        <end position="261"/>
    </location>
</feature>
<feature type="strand" evidence="10">
    <location>
        <begin position="264"/>
        <end position="270"/>
    </location>
</feature>
<feature type="helix" evidence="10">
    <location>
        <begin position="273"/>
        <end position="276"/>
    </location>
</feature>
<feature type="strand" evidence="10">
    <location>
        <begin position="280"/>
        <end position="282"/>
    </location>
</feature>
<feature type="helix" evidence="10">
    <location>
        <begin position="285"/>
        <end position="288"/>
    </location>
</feature>
<feature type="helix" evidence="10">
    <location>
        <begin position="289"/>
        <end position="302"/>
    </location>
</feature>
<feature type="strand" evidence="10">
    <location>
        <begin position="306"/>
        <end position="315"/>
    </location>
</feature>
<feature type="helix" evidence="10">
    <location>
        <begin position="319"/>
        <end position="321"/>
    </location>
</feature>
<feature type="helix" evidence="10">
    <location>
        <begin position="324"/>
        <end position="327"/>
    </location>
</feature>
<feature type="strand" evidence="10">
    <location>
        <begin position="331"/>
        <end position="337"/>
    </location>
</feature>
<feature type="helix" evidence="10">
    <location>
        <begin position="343"/>
        <end position="354"/>
    </location>
</feature>
<feature type="helix" evidence="10">
    <location>
        <begin position="365"/>
        <end position="371"/>
    </location>
</feature>
<feature type="helix" evidence="10">
    <location>
        <begin position="377"/>
        <end position="393"/>
    </location>
</feature>
<feature type="strand" evidence="10">
    <location>
        <begin position="397"/>
        <end position="399"/>
    </location>
</feature>
<feature type="helix" evidence="10">
    <location>
        <begin position="401"/>
        <end position="415"/>
    </location>
</feature>
<accession>Q58576</accession>
<comment type="function">
    <text evidence="1 2 3 4 5 7">ATPase which is responsible for recognizing, binding, unfolding and translocation of substrate proteins into the archaeal 20S proteasome core particle. Is essential for opening the gate of the 20S proteasome via an interaction with its C-terminus, thereby allowing substrate entry and access to the site of proteolysis. Thus, the C-termini of the proteasomal ATPase function like a 'key in a lock' to induce gate opening and therefore regulate proteolysis. Unfolding activity requires energy from ATP hydrolysis, whereas ATP binding alone promotes ATPase-20S proteasome association which triggers gate opening, and supports translocation of unfolded substrates. In addition to ATP, is able to cleave other nucleotide triphosphates such as CTP, GTP and UTP, but hydrolysis of these other nucleotides is less effective in promoting proteolysis than ATP. Moreover, PAN by itself can function as a chaperone in vitro.</text>
</comment>
<comment type="activity regulation">
    <text evidence="2 3">ATPase activity is inhibited by EDTA, N-ethylmaleimide (NEM) and p-chloromercuriphenyl-sulfonic acid (PCMS) in vitro.</text>
</comment>
<comment type="biophysicochemical properties">
    <kinetics>
        <KM evidence="3">497 uM for ATP</KM>
        <KM evidence="3">307 uM for CTP</KM>
        <Vmax evidence="3">3.5 umol/min/mg enzyme for ATPase activity</Vmax>
        <Vmax evidence="3">5.8 umol/min/mg enzyme for CTPase activity</Vmax>
    </kinetics>
    <phDependence>
        <text evidence="3">Optimum pH is 7-8 for ATPase activity. Is more active at pH 8 to 10 than at pH 5.5.</text>
    </phDependence>
    <temperatureDependence>
        <text evidence="3">Optimum temperature is 80 degrees Celsius for ATPase activity.</text>
    </temperatureDependence>
</comment>
<comment type="subunit">
    <text evidence="3 4 6 8">Homohexamer. The hexameric complex has a two-ring architecture resembling a top hat that caps the 20S proteasome core at one or both ends. Alone, can form a complex composed of two stacked hexameric rings in vitro. Upon ATP-binding, the C-terminus of PAN interacts with the alpha-rings of the proteasome core by binding to the intersubunit pockets.</text>
</comment>
<comment type="subcellular location">
    <subcellularLocation>
        <location>Cytoplasm</location>
    </subcellularLocation>
</comment>
<comment type="domain">
    <text evidence="1 6">Consists of three main regions, an N-terminal coiled-coil domain that may assist in substrate recognition, an interdomain involved in PAN hexamerization, and a C-terminal ATPase domain of the AAA type.</text>
</comment>
<comment type="similarity">
    <text evidence="1">Belongs to the AAA ATPase family.</text>
</comment>
<reference key="1">
    <citation type="journal article" date="1996" name="Science">
        <title>Complete genome sequence of the methanogenic archaeon, Methanococcus jannaschii.</title>
        <authorList>
            <person name="Bult C.J."/>
            <person name="White O."/>
            <person name="Olsen G.J."/>
            <person name="Zhou L."/>
            <person name="Fleischmann R.D."/>
            <person name="Sutton G.G."/>
            <person name="Blake J.A."/>
            <person name="FitzGerald L.M."/>
            <person name="Clayton R.A."/>
            <person name="Gocayne J.D."/>
            <person name="Kerlavage A.R."/>
            <person name="Dougherty B.A."/>
            <person name="Tomb J.-F."/>
            <person name="Adams M.D."/>
            <person name="Reich C.I."/>
            <person name="Overbeek R."/>
            <person name="Kirkness E.F."/>
            <person name="Weinstock K.G."/>
            <person name="Merrick J.M."/>
            <person name="Glodek A."/>
            <person name="Scott J.L."/>
            <person name="Geoghagen N.S.M."/>
            <person name="Weidman J.F."/>
            <person name="Fuhrmann J.L."/>
            <person name="Nguyen D."/>
            <person name="Utterback T.R."/>
            <person name="Kelley J.M."/>
            <person name="Peterson J.D."/>
            <person name="Sadow P.W."/>
            <person name="Hanna M.C."/>
            <person name="Cotton M.D."/>
            <person name="Roberts K.M."/>
            <person name="Hurst M.A."/>
            <person name="Kaine B.P."/>
            <person name="Borodovsky M."/>
            <person name="Klenk H.-P."/>
            <person name="Fraser C.M."/>
            <person name="Smith H.O."/>
            <person name="Woese C.R."/>
            <person name="Venter J.C."/>
        </authorList>
    </citation>
    <scope>NUCLEOTIDE SEQUENCE [LARGE SCALE GENOMIC DNA]</scope>
    <source>
        <strain>ATCC 43067 / DSM 2661 / JAL-1 / JCM 10045 / NBRC 100440</strain>
    </source>
</reference>
<reference key="2">
    <citation type="journal article" date="2000" name="J. Bacteriol.">
        <title>Biochemical and physical properties of the Methanococcus jannaschii 20S proteasome and PAN, a homolog of the ATPase (Rpt) subunits of the eucaryal 26S proteasome.</title>
        <authorList>
            <person name="Wilson H.L."/>
            <person name="Ou M.S."/>
            <person name="Aldrich H.C."/>
            <person name="Maupin-Furlow J."/>
        </authorList>
    </citation>
    <scope>PROTEIN SEQUENCE OF N-TERMINUS</scope>
    <scope>FUNCTION AS AN ATPASE</scope>
    <scope>BIOPHYSICOCHEMICAL PROPERTIES</scope>
    <scope>ACTIVITY REGULATION</scope>
    <scope>SUBUNIT</scope>
    <scope>INTERACTION WITH THE PROTEASOME</scope>
</reference>
<reference key="3">
    <citation type="journal article" date="1999" name="J. Biol. Chem.">
        <title>An archaebacterial ATPase, homologous to ATPases in the eukaryotic 26 S proteasome, activates protein breakdown by 20 S proteasomes.</title>
        <authorList>
            <person name="Zwickl P."/>
            <person name="Ng D."/>
            <person name="Woo K.M."/>
            <person name="Klenk H.-P."/>
            <person name="Goldberg A.L."/>
        </authorList>
    </citation>
    <scope>FUNCTION IN THE PROTEASOME DEGRADATION PATHWAY</scope>
    <scope>ATPASE ACTIVITY</scope>
    <scope>NUCLEOTIDE SPECIFICITY</scope>
    <scope>ACTIVITY REGULATION</scope>
</reference>
<reference key="4">
    <citation type="journal article" date="2000" name="Nat. Cell Biol.">
        <title>PAN, the proteasome-activating nucleotidase from archaebacteria, is a protein-unfolding molecular chaperone.</title>
        <authorList>
            <person name="Benaroudj N."/>
            <person name="Goldberg A.L."/>
        </authorList>
    </citation>
    <scope>CHAPERONE ACTIVITY</scope>
</reference>
<reference key="5">
    <citation type="journal article" date="2005" name="Mol. Cell">
        <title>ATP binding to PAN or the 26S ATPases causes association with the 20S proteasome, gate opening, and translocation of unfolded proteins.</title>
        <authorList>
            <person name="Smith D.M."/>
            <person name="Kafri G."/>
            <person name="Cheng Y."/>
            <person name="Ng D."/>
            <person name="Walz T."/>
            <person name="Goldberg A.L."/>
        </authorList>
    </citation>
    <scope>FUNCTION</scope>
    <scope>INTERACTION WITH THE PROTEASOME</scope>
    <scope>SUBUNIT</scope>
</reference>
<reference key="6">
    <citation type="journal article" date="2007" name="Mol. Cell">
        <title>Docking of the proteasomal ATPases' carboxyl termini in the 20S proteasome's alpha ring opens the gate for substrate entry.</title>
        <authorList>
            <person name="Smith D.M."/>
            <person name="Chang S.C."/>
            <person name="Park S."/>
            <person name="Finley D."/>
            <person name="Cheng Y."/>
            <person name="Goldberg A.L."/>
        </authorList>
    </citation>
    <scope>FUNCTION</scope>
    <scope>ROLE OF C-TERMINUS IN GATE OPENING</scope>
    <scope>MUTAGENESIS OF LEU-428; TYR-429 AND ARG-430</scope>
</reference>
<reference key="7">
    <citation type="journal article" date="2009" name="Mol. Cell">
        <title>Mechanism of substrate unfolding and translocation by the regulatory particle of the proteasome from Methanocaldococcus jannaschii.</title>
        <authorList>
            <person name="Zhang F."/>
            <person name="Wu Z."/>
            <person name="Zhang P."/>
            <person name="Tian G."/>
            <person name="Finley D."/>
            <person name="Shi Y."/>
        </authorList>
    </citation>
    <scope>FUNCTION</scope>
    <scope>UNFOLDING AND TRANSLOCATION MECHANISM</scope>
    <scope>MUTAGENESIS OF GLY-113; ASP-153; ALA-156; LYS-157; PHE-244; ILE-245; GLY-246; 250-SER-LEU-251; GLU-271; GLY-285 AND GLY-286</scope>
</reference>
<reference key="8">
    <citation type="journal article" date="2009" name="Mol. Cell">
        <title>Structural insights into the regulatory particle of the proteasome from Methanocaldococcus jannaschii.</title>
        <authorList>
            <person name="Zhang F."/>
            <person name="Hu M."/>
            <person name="Tian G."/>
            <person name="Zhang P."/>
            <person name="Finley D."/>
            <person name="Jeffrey P.D."/>
            <person name="Shi Y."/>
        </authorList>
    </citation>
    <scope>X-RAY CRYSTALLOGRAPHY (2.1 ANGSTROMS) OF 74-430 IN COMPLEX WITH ADP</scope>
    <scope>DOMAIN</scope>
</reference>
<reference key="9">
    <citation type="journal article" date="2010" name="EMBO J.">
        <title>Interactions of PAN's C-termini with archaeal 20S proteasome and implications for the eukaryotic proteasome-ATPase interactions.</title>
        <authorList>
            <person name="Yu Y."/>
            <person name="Smith D.M."/>
            <person name="Kim H.M."/>
            <person name="Rodriguez V."/>
            <person name="Goldberg A.L."/>
            <person name="Cheng Y."/>
        </authorList>
    </citation>
    <scope>X-RAY CRYSTALLOGRAPHY (4.0 ANGSTROMS) OF 424-430 IN COMPLEX WITH THE PROTEASOME OF T.ACIDOPHILUM</scope>
</reference>
<sequence length="430" mass="48690">MVFEEFISTELKKEKKAFTEEFKEEKEINDNSNLKNDLLKEELQEKARIAELESRILKLELEKKELERENLQLMKENEILRRELDRMRVPPLIVGTVVDKVGERKVVVKSSTGPSFLVNVSHFVNPDDLAPGKRVCLNQQTLTVVDVLPENKDYRAKAMEVDERPNVRYEDIGGLEKQMQEIREVVELPLKHPELFEKVGIEPPKGILLYGPPGTGKTLLAKAVATETNATFIRVVGSELVKKFIGEGASLVKDIFKLAKEKAPSIIFIDEIDAIAAKRTDALTGGDREVQRTLMQLLAEMDGFDARGDVKIIGATNRPDILDPAILRPGRFDRIIEVPAPDEKGRLEILKIHTRKMNLAEDVNLEEIAKMTEGCVGAELKAICTEAGMNAIRELRDYVTMDDFRKAVEKIMEKKKVKVKEPAHLDVLYR</sequence>
<keyword id="KW-0002">3D-structure</keyword>
<keyword id="KW-0067">ATP-binding</keyword>
<keyword id="KW-0143">Chaperone</keyword>
<keyword id="KW-0175">Coiled coil</keyword>
<keyword id="KW-0963">Cytoplasm</keyword>
<keyword id="KW-0903">Direct protein sequencing</keyword>
<keyword id="KW-0547">Nucleotide-binding</keyword>
<keyword id="KW-0647">Proteasome</keyword>
<keyword id="KW-1185">Reference proteome</keyword>
<name>PAN_METJA</name>
<dbReference type="EMBL" id="L77117">
    <property type="protein sequence ID" value="AAB99179.1"/>
    <property type="molecule type" value="Genomic_DNA"/>
</dbReference>
<dbReference type="PIR" id="G64446">
    <property type="entry name" value="G64446"/>
</dbReference>
<dbReference type="RefSeq" id="WP_010870689.1">
    <property type="nucleotide sequence ID" value="NC_000909.1"/>
</dbReference>
<dbReference type="PDB" id="3H43">
    <property type="method" value="X-ray"/>
    <property type="resolution" value="2.10 A"/>
    <property type="chains" value="A/B/C/D/E/F/G/H/I/J/K/L=74-150"/>
</dbReference>
<dbReference type="PDB" id="3H4M">
    <property type="method" value="X-ray"/>
    <property type="resolution" value="3.11 A"/>
    <property type="chains" value="A/B/C=155-430"/>
</dbReference>
<dbReference type="PDB" id="3IPM">
    <property type="method" value="X-ray"/>
    <property type="resolution" value="4.00 A"/>
    <property type="chains" value="O/P/Q/R/S/T/U=424-430"/>
</dbReference>
<dbReference type="PDBsum" id="3H43"/>
<dbReference type="PDBsum" id="3H4M"/>
<dbReference type="PDBsum" id="3IPM"/>
<dbReference type="SMR" id="Q58576"/>
<dbReference type="FunCoup" id="Q58576">
    <property type="interactions" value="135"/>
</dbReference>
<dbReference type="STRING" id="243232.MJ_1176"/>
<dbReference type="PaxDb" id="243232-MJ_1176"/>
<dbReference type="EnsemblBacteria" id="AAB99179">
    <property type="protein sequence ID" value="AAB99179"/>
    <property type="gene ID" value="MJ_1176"/>
</dbReference>
<dbReference type="GeneID" id="1452074"/>
<dbReference type="KEGG" id="mja:MJ_1176"/>
<dbReference type="eggNOG" id="arCOG01306">
    <property type="taxonomic scope" value="Archaea"/>
</dbReference>
<dbReference type="HOGENOM" id="CLU_000688_2_1_2"/>
<dbReference type="InParanoid" id="Q58576"/>
<dbReference type="OrthoDB" id="77269at2157"/>
<dbReference type="PhylomeDB" id="Q58576"/>
<dbReference type="BRENDA" id="5.6.1.5">
    <property type="organism ID" value="3260"/>
</dbReference>
<dbReference type="SABIO-RK" id="Q58576"/>
<dbReference type="EvolutionaryTrace" id="Q58576"/>
<dbReference type="Proteomes" id="UP000000805">
    <property type="component" value="Chromosome"/>
</dbReference>
<dbReference type="GO" id="GO:0005737">
    <property type="term" value="C:cytoplasm"/>
    <property type="evidence" value="ECO:0007669"/>
    <property type="project" value="UniProtKB-SubCell"/>
</dbReference>
<dbReference type="GO" id="GO:0008540">
    <property type="term" value="C:proteasome regulatory particle, base subcomplex"/>
    <property type="evidence" value="ECO:0000318"/>
    <property type="project" value="GO_Central"/>
</dbReference>
<dbReference type="GO" id="GO:0022623">
    <property type="term" value="C:proteasome-activating nucleotidase complex"/>
    <property type="evidence" value="ECO:0000314"/>
    <property type="project" value="UniProtKB"/>
</dbReference>
<dbReference type="GO" id="GO:0005524">
    <property type="term" value="F:ATP binding"/>
    <property type="evidence" value="ECO:0007669"/>
    <property type="project" value="UniProtKB-UniRule"/>
</dbReference>
<dbReference type="GO" id="GO:0016887">
    <property type="term" value="F:ATP hydrolysis activity"/>
    <property type="evidence" value="ECO:0000314"/>
    <property type="project" value="UniProtKB"/>
</dbReference>
<dbReference type="GO" id="GO:0043273">
    <property type="term" value="F:CTPase activity"/>
    <property type="evidence" value="ECO:0000314"/>
    <property type="project" value="UniProtKB"/>
</dbReference>
<dbReference type="GO" id="GO:0003924">
    <property type="term" value="F:GTPase activity"/>
    <property type="evidence" value="ECO:0000314"/>
    <property type="project" value="UniProtKB"/>
</dbReference>
<dbReference type="GO" id="GO:0036402">
    <property type="term" value="F:proteasome-activating activity"/>
    <property type="evidence" value="ECO:0000318"/>
    <property type="project" value="GO_Central"/>
</dbReference>
<dbReference type="GO" id="GO:0010498">
    <property type="term" value="P:proteasomal protein catabolic process"/>
    <property type="evidence" value="ECO:0000314"/>
    <property type="project" value="UniProtKB"/>
</dbReference>
<dbReference type="GO" id="GO:0043161">
    <property type="term" value="P:proteasome-mediated ubiquitin-dependent protein catabolic process"/>
    <property type="evidence" value="ECO:0000318"/>
    <property type="project" value="GO_Central"/>
</dbReference>
<dbReference type="GO" id="GO:0043335">
    <property type="term" value="P:protein unfolding"/>
    <property type="evidence" value="ECO:0000314"/>
    <property type="project" value="UniProtKB"/>
</dbReference>
<dbReference type="CDD" id="cd19502">
    <property type="entry name" value="RecA-like_PAN_like"/>
    <property type="match status" value="1"/>
</dbReference>
<dbReference type="FunFam" id="3.40.50.300:FF:000033">
    <property type="entry name" value="26S protease regulatory subunit 6B"/>
    <property type="match status" value="1"/>
</dbReference>
<dbReference type="FunFam" id="1.10.8.60:FF:000006">
    <property type="entry name" value="26S protease regulatory subunit 8"/>
    <property type="match status" value="1"/>
</dbReference>
<dbReference type="Gene3D" id="1.10.8.60">
    <property type="match status" value="1"/>
</dbReference>
<dbReference type="Gene3D" id="2.40.50.140">
    <property type="entry name" value="Nucleic acid-binding proteins"/>
    <property type="match status" value="1"/>
</dbReference>
<dbReference type="Gene3D" id="3.40.50.300">
    <property type="entry name" value="P-loop containing nucleotide triphosphate hydrolases"/>
    <property type="match status" value="1"/>
</dbReference>
<dbReference type="HAMAP" id="MF_00553">
    <property type="entry name" value="PAN"/>
    <property type="match status" value="1"/>
</dbReference>
<dbReference type="InterPro" id="IPR050221">
    <property type="entry name" value="26S_Proteasome_ATPase"/>
</dbReference>
<dbReference type="InterPro" id="IPR003593">
    <property type="entry name" value="AAA+_ATPase"/>
</dbReference>
<dbReference type="InterPro" id="IPR041569">
    <property type="entry name" value="AAA_lid_3"/>
</dbReference>
<dbReference type="InterPro" id="IPR003959">
    <property type="entry name" value="ATPase_AAA_core"/>
</dbReference>
<dbReference type="InterPro" id="IPR003960">
    <property type="entry name" value="ATPase_AAA_CS"/>
</dbReference>
<dbReference type="InterPro" id="IPR012340">
    <property type="entry name" value="NA-bd_OB-fold"/>
</dbReference>
<dbReference type="InterPro" id="IPR023501">
    <property type="entry name" value="Nucleotidase_PAN"/>
</dbReference>
<dbReference type="InterPro" id="IPR027417">
    <property type="entry name" value="P-loop_NTPase"/>
</dbReference>
<dbReference type="InterPro" id="IPR032501">
    <property type="entry name" value="Prot_ATP_ID_OB_2nd"/>
</dbReference>
<dbReference type="NCBIfam" id="NF003069">
    <property type="entry name" value="PRK03992.1"/>
    <property type="match status" value="1"/>
</dbReference>
<dbReference type="NCBIfam" id="TIGR01242">
    <property type="entry name" value="proteasome-activating nucleotidase"/>
    <property type="match status" value="1"/>
</dbReference>
<dbReference type="PANTHER" id="PTHR23073">
    <property type="entry name" value="26S PROTEASOME REGULATORY SUBUNIT"/>
    <property type="match status" value="1"/>
</dbReference>
<dbReference type="Pfam" id="PF00004">
    <property type="entry name" value="AAA"/>
    <property type="match status" value="1"/>
</dbReference>
<dbReference type="Pfam" id="PF17862">
    <property type="entry name" value="AAA_lid_3"/>
    <property type="match status" value="1"/>
</dbReference>
<dbReference type="Pfam" id="PF16450">
    <property type="entry name" value="Prot_ATP_ID_OB_C"/>
    <property type="match status" value="1"/>
</dbReference>
<dbReference type="SMART" id="SM00382">
    <property type="entry name" value="AAA"/>
    <property type="match status" value="1"/>
</dbReference>
<dbReference type="SUPFAM" id="SSF52540">
    <property type="entry name" value="P-loop containing nucleoside triphosphate hydrolases"/>
    <property type="match status" value="1"/>
</dbReference>
<dbReference type="PROSITE" id="PS00674">
    <property type="entry name" value="AAA"/>
    <property type="match status" value="1"/>
</dbReference>
<evidence type="ECO:0000255" key="1">
    <source>
        <dbReference type="HAMAP-Rule" id="MF_00553"/>
    </source>
</evidence>
<evidence type="ECO:0000269" key="2">
    <source>
    </source>
</evidence>
<evidence type="ECO:0000269" key="3">
    <source>
    </source>
</evidence>
<evidence type="ECO:0000269" key="4">
    <source>
    </source>
</evidence>
<evidence type="ECO:0000269" key="5">
    <source>
    </source>
</evidence>
<evidence type="ECO:0000269" key="6">
    <source>
    </source>
</evidence>
<evidence type="ECO:0000269" key="7">
    <source>
    </source>
</evidence>
<evidence type="ECO:0000269" key="8">
    <source>
    </source>
</evidence>
<evidence type="ECO:0007829" key="9">
    <source>
        <dbReference type="PDB" id="3H43"/>
    </source>
</evidence>
<evidence type="ECO:0007829" key="10">
    <source>
        <dbReference type="PDB" id="3H4M"/>
    </source>
</evidence>
<proteinExistence type="evidence at protein level"/>
<organism>
    <name type="scientific">Methanocaldococcus jannaschii (strain ATCC 43067 / DSM 2661 / JAL-1 / JCM 10045 / NBRC 100440)</name>
    <name type="common">Methanococcus jannaschii</name>
    <dbReference type="NCBI Taxonomy" id="243232"/>
    <lineage>
        <taxon>Archaea</taxon>
        <taxon>Methanobacteriati</taxon>
        <taxon>Methanobacteriota</taxon>
        <taxon>Methanomada group</taxon>
        <taxon>Methanococci</taxon>
        <taxon>Methanococcales</taxon>
        <taxon>Methanocaldococcaceae</taxon>
        <taxon>Methanocaldococcus</taxon>
    </lineage>
</organism>
<protein>
    <recommendedName>
        <fullName evidence="1">Proteasome-activating nucleotidase</fullName>
        <shortName evidence="1">PAN</shortName>
    </recommendedName>
    <alternativeName>
        <fullName evidence="1">Proteasomal ATPase</fullName>
    </alternativeName>
    <alternativeName>
        <fullName evidence="1">Proteasome regulatory ATPase</fullName>
    </alternativeName>
    <alternativeName>
        <fullName evidence="1">Proteasome regulatory particle</fullName>
    </alternativeName>
</protein>